<feature type="chain" id="PRO_0000149422" description="Adenine phosphoribosyltransferase">
    <location>
        <begin position="1"/>
        <end position="188"/>
    </location>
</feature>
<name>APT_NEIMB</name>
<sequence length="188" mass="20443">MLVHPEAMSVGALADKIRKIENWPQKGILFHDITPVLQSAEYFRLLVDLLVYRYMDQKIDIVAGLDARGFIIGAALAYQLNVGFVPIRKKGKLPFETVSQSYALEYGEAAVEIHTDAVKLGSRVLLVDDLIATGGTMLAGLELIRKLGGEIVEAAAILEFTDLQGGKNIRASGAPLFTLLQNEGCMKG</sequence>
<organism>
    <name type="scientific">Neisseria meningitidis serogroup B (strain ATCC BAA-335 / MC58)</name>
    <dbReference type="NCBI Taxonomy" id="122586"/>
    <lineage>
        <taxon>Bacteria</taxon>
        <taxon>Pseudomonadati</taxon>
        <taxon>Pseudomonadota</taxon>
        <taxon>Betaproteobacteria</taxon>
        <taxon>Neisseriales</taxon>
        <taxon>Neisseriaceae</taxon>
        <taxon>Neisseria</taxon>
    </lineage>
</organism>
<accession>Q9JYB4</accession>
<reference key="1">
    <citation type="journal article" date="2000" name="Science">
        <title>Complete genome sequence of Neisseria meningitidis serogroup B strain MC58.</title>
        <authorList>
            <person name="Tettelin H."/>
            <person name="Saunders N.J."/>
            <person name="Heidelberg J.F."/>
            <person name="Jeffries A.C."/>
            <person name="Nelson K.E."/>
            <person name="Eisen J.A."/>
            <person name="Ketchum K.A."/>
            <person name="Hood D.W."/>
            <person name="Peden J.F."/>
            <person name="Dodson R.J."/>
            <person name="Nelson W.C."/>
            <person name="Gwinn M.L."/>
            <person name="DeBoy R.T."/>
            <person name="Peterson J.D."/>
            <person name="Hickey E.K."/>
            <person name="Haft D.H."/>
            <person name="Salzberg S.L."/>
            <person name="White O."/>
            <person name="Fleischmann R.D."/>
            <person name="Dougherty B.A."/>
            <person name="Mason T.M."/>
            <person name="Ciecko A."/>
            <person name="Parksey D.S."/>
            <person name="Blair E."/>
            <person name="Cittone H."/>
            <person name="Clark E.B."/>
            <person name="Cotton M.D."/>
            <person name="Utterback T.R."/>
            <person name="Khouri H.M."/>
            <person name="Qin H."/>
            <person name="Vamathevan J.J."/>
            <person name="Gill J."/>
            <person name="Scarlato V."/>
            <person name="Masignani V."/>
            <person name="Pizza M."/>
            <person name="Grandi G."/>
            <person name="Sun L."/>
            <person name="Smith H.O."/>
            <person name="Fraser C.M."/>
            <person name="Moxon E.R."/>
            <person name="Rappuoli R."/>
            <person name="Venter J.C."/>
        </authorList>
    </citation>
    <scope>NUCLEOTIDE SEQUENCE [LARGE SCALE GENOMIC DNA]</scope>
    <source>
        <strain>ATCC BAA-335 / MC58</strain>
    </source>
</reference>
<dbReference type="EC" id="2.4.2.7" evidence="1"/>
<dbReference type="EMBL" id="AE002098">
    <property type="protein sequence ID" value="AAF42011.1"/>
    <property type="molecule type" value="Genomic_DNA"/>
</dbReference>
<dbReference type="PIR" id="H81055">
    <property type="entry name" value="H81055"/>
</dbReference>
<dbReference type="RefSeq" id="NP_274667.1">
    <property type="nucleotide sequence ID" value="NC_003112.2"/>
</dbReference>
<dbReference type="SMR" id="Q9JYB4"/>
<dbReference type="FunCoup" id="Q9JYB4">
    <property type="interactions" value="368"/>
</dbReference>
<dbReference type="STRING" id="122586.NMB1662"/>
<dbReference type="PaxDb" id="122586-NMB1662"/>
<dbReference type="KEGG" id="nme:NMB1662"/>
<dbReference type="PATRIC" id="fig|122586.8.peg.2139"/>
<dbReference type="HOGENOM" id="CLU_063339_3_0_4"/>
<dbReference type="InParanoid" id="Q9JYB4"/>
<dbReference type="OrthoDB" id="9803963at2"/>
<dbReference type="UniPathway" id="UPA00588">
    <property type="reaction ID" value="UER00646"/>
</dbReference>
<dbReference type="Proteomes" id="UP000000425">
    <property type="component" value="Chromosome"/>
</dbReference>
<dbReference type="GO" id="GO:0005737">
    <property type="term" value="C:cytoplasm"/>
    <property type="evidence" value="ECO:0000318"/>
    <property type="project" value="GO_Central"/>
</dbReference>
<dbReference type="GO" id="GO:0002055">
    <property type="term" value="F:adenine binding"/>
    <property type="evidence" value="ECO:0000318"/>
    <property type="project" value="GO_Central"/>
</dbReference>
<dbReference type="GO" id="GO:0003999">
    <property type="term" value="F:adenine phosphoribosyltransferase activity"/>
    <property type="evidence" value="ECO:0000318"/>
    <property type="project" value="GO_Central"/>
</dbReference>
<dbReference type="GO" id="GO:0016208">
    <property type="term" value="F:AMP binding"/>
    <property type="evidence" value="ECO:0000318"/>
    <property type="project" value="GO_Central"/>
</dbReference>
<dbReference type="GO" id="GO:0006168">
    <property type="term" value="P:adenine salvage"/>
    <property type="evidence" value="ECO:0000318"/>
    <property type="project" value="GO_Central"/>
</dbReference>
<dbReference type="GO" id="GO:0044209">
    <property type="term" value="P:AMP salvage"/>
    <property type="evidence" value="ECO:0000318"/>
    <property type="project" value="GO_Central"/>
</dbReference>
<dbReference type="GO" id="GO:0006166">
    <property type="term" value="P:purine ribonucleoside salvage"/>
    <property type="evidence" value="ECO:0007669"/>
    <property type="project" value="UniProtKB-KW"/>
</dbReference>
<dbReference type="CDD" id="cd06223">
    <property type="entry name" value="PRTases_typeI"/>
    <property type="match status" value="1"/>
</dbReference>
<dbReference type="FunFam" id="3.40.50.2020:FF:000021">
    <property type="entry name" value="Adenine phosphoribosyltransferase"/>
    <property type="match status" value="1"/>
</dbReference>
<dbReference type="Gene3D" id="3.40.50.2020">
    <property type="match status" value="1"/>
</dbReference>
<dbReference type="HAMAP" id="MF_00004">
    <property type="entry name" value="Aden_phosphoribosyltr"/>
    <property type="match status" value="1"/>
</dbReference>
<dbReference type="InterPro" id="IPR005764">
    <property type="entry name" value="Ade_phspho_trans"/>
</dbReference>
<dbReference type="InterPro" id="IPR000836">
    <property type="entry name" value="PRibTrfase_dom"/>
</dbReference>
<dbReference type="InterPro" id="IPR029057">
    <property type="entry name" value="PRTase-like"/>
</dbReference>
<dbReference type="InterPro" id="IPR050054">
    <property type="entry name" value="UPRTase/APRTase"/>
</dbReference>
<dbReference type="NCBIfam" id="TIGR01090">
    <property type="entry name" value="apt"/>
    <property type="match status" value="1"/>
</dbReference>
<dbReference type="NCBIfam" id="NF002634">
    <property type="entry name" value="PRK02304.1-3"/>
    <property type="match status" value="1"/>
</dbReference>
<dbReference type="NCBIfam" id="NF002636">
    <property type="entry name" value="PRK02304.1-5"/>
    <property type="match status" value="1"/>
</dbReference>
<dbReference type="PANTHER" id="PTHR32315">
    <property type="entry name" value="ADENINE PHOSPHORIBOSYLTRANSFERASE"/>
    <property type="match status" value="1"/>
</dbReference>
<dbReference type="PANTHER" id="PTHR32315:SF3">
    <property type="entry name" value="ADENINE PHOSPHORIBOSYLTRANSFERASE"/>
    <property type="match status" value="1"/>
</dbReference>
<dbReference type="Pfam" id="PF00156">
    <property type="entry name" value="Pribosyltran"/>
    <property type="match status" value="1"/>
</dbReference>
<dbReference type="SUPFAM" id="SSF53271">
    <property type="entry name" value="PRTase-like"/>
    <property type="match status" value="1"/>
</dbReference>
<dbReference type="PROSITE" id="PS00103">
    <property type="entry name" value="PUR_PYR_PR_TRANSFER"/>
    <property type="match status" value="1"/>
</dbReference>
<keyword id="KW-0963">Cytoplasm</keyword>
<keyword id="KW-0328">Glycosyltransferase</keyword>
<keyword id="KW-0660">Purine salvage</keyword>
<keyword id="KW-1185">Reference proteome</keyword>
<keyword id="KW-0808">Transferase</keyword>
<comment type="function">
    <text evidence="1">Catalyzes a salvage reaction resulting in the formation of AMP, that is energically less costly than de novo synthesis.</text>
</comment>
<comment type="catalytic activity">
    <reaction evidence="1">
        <text>AMP + diphosphate = 5-phospho-alpha-D-ribose 1-diphosphate + adenine</text>
        <dbReference type="Rhea" id="RHEA:16609"/>
        <dbReference type="ChEBI" id="CHEBI:16708"/>
        <dbReference type="ChEBI" id="CHEBI:33019"/>
        <dbReference type="ChEBI" id="CHEBI:58017"/>
        <dbReference type="ChEBI" id="CHEBI:456215"/>
        <dbReference type="EC" id="2.4.2.7"/>
    </reaction>
</comment>
<comment type="pathway">
    <text evidence="1">Purine metabolism; AMP biosynthesis via salvage pathway; AMP from adenine: step 1/1.</text>
</comment>
<comment type="subunit">
    <text evidence="1">Homodimer.</text>
</comment>
<comment type="subcellular location">
    <subcellularLocation>
        <location evidence="1">Cytoplasm</location>
    </subcellularLocation>
</comment>
<comment type="similarity">
    <text evidence="1">Belongs to the purine/pyrimidine phosphoribosyltransferase family.</text>
</comment>
<evidence type="ECO:0000255" key="1">
    <source>
        <dbReference type="HAMAP-Rule" id="MF_00004"/>
    </source>
</evidence>
<proteinExistence type="inferred from homology"/>
<protein>
    <recommendedName>
        <fullName evidence="1">Adenine phosphoribosyltransferase</fullName>
        <shortName evidence="1">APRT</shortName>
        <ecNumber evidence="1">2.4.2.7</ecNumber>
    </recommendedName>
</protein>
<gene>
    <name evidence="1" type="primary">apt</name>
    <name type="ordered locus">NMB1662</name>
</gene>